<gene>
    <name type="ordered locus">RP514</name>
</gene>
<keyword id="KW-0274">FAD</keyword>
<keyword id="KW-0285">Flavoprotein</keyword>
<keyword id="KW-0521">NADP</keyword>
<keyword id="KW-0560">Oxidoreductase</keyword>
<keyword id="KW-1185">Reference proteome</keyword>
<proteinExistence type="inferred from homology"/>
<accession>Q9ZD33</accession>
<evidence type="ECO:0000255" key="1">
    <source>
        <dbReference type="HAMAP-Rule" id="MF_01685"/>
    </source>
</evidence>
<protein>
    <recommendedName>
        <fullName evidence="1">Ferredoxin--NADP reductase</fullName>
        <shortName evidence="1">FNR</shortName>
        <shortName evidence="1">Fd-NADP(+) reductase</shortName>
        <ecNumber evidence="1">1.18.1.2</ecNumber>
    </recommendedName>
</protein>
<dbReference type="EC" id="1.18.1.2" evidence="1"/>
<dbReference type="EMBL" id="AJ235272">
    <property type="protein sequence ID" value="CAA14966.1"/>
    <property type="molecule type" value="Genomic_DNA"/>
</dbReference>
<dbReference type="PIR" id="D71655">
    <property type="entry name" value="D71655"/>
</dbReference>
<dbReference type="RefSeq" id="NP_220890.1">
    <property type="nucleotide sequence ID" value="NC_000963.1"/>
</dbReference>
<dbReference type="RefSeq" id="WP_004599078.1">
    <property type="nucleotide sequence ID" value="NC_000963.1"/>
</dbReference>
<dbReference type="SMR" id="Q9ZD33"/>
<dbReference type="STRING" id="272947.gene:17555594"/>
<dbReference type="EnsemblBacteria" id="CAA14966">
    <property type="protein sequence ID" value="CAA14966"/>
    <property type="gene ID" value="CAA14966"/>
</dbReference>
<dbReference type="KEGG" id="rpr:RP514"/>
<dbReference type="PATRIC" id="fig|272947.5.peg.525"/>
<dbReference type="eggNOG" id="COG0492">
    <property type="taxonomic scope" value="Bacteria"/>
</dbReference>
<dbReference type="HOGENOM" id="CLU_031864_5_5_5"/>
<dbReference type="OrthoDB" id="9806179at2"/>
<dbReference type="Proteomes" id="UP000002480">
    <property type="component" value="Chromosome"/>
</dbReference>
<dbReference type="GO" id="GO:0004324">
    <property type="term" value="F:ferredoxin-NADP+ reductase activity"/>
    <property type="evidence" value="ECO:0007669"/>
    <property type="project" value="UniProtKB-UniRule"/>
</dbReference>
<dbReference type="GO" id="GO:0050660">
    <property type="term" value="F:flavin adenine dinucleotide binding"/>
    <property type="evidence" value="ECO:0007669"/>
    <property type="project" value="UniProtKB-UniRule"/>
</dbReference>
<dbReference type="GO" id="GO:0050661">
    <property type="term" value="F:NADP binding"/>
    <property type="evidence" value="ECO:0007669"/>
    <property type="project" value="UniProtKB-UniRule"/>
</dbReference>
<dbReference type="Gene3D" id="3.50.50.60">
    <property type="entry name" value="FAD/NAD(P)-binding domain"/>
    <property type="match status" value="2"/>
</dbReference>
<dbReference type="HAMAP" id="MF_01685">
    <property type="entry name" value="FENR2"/>
    <property type="match status" value="1"/>
</dbReference>
<dbReference type="InterPro" id="IPR036188">
    <property type="entry name" value="FAD/NAD-bd_sf"/>
</dbReference>
<dbReference type="InterPro" id="IPR023753">
    <property type="entry name" value="FAD/NAD-binding_dom"/>
</dbReference>
<dbReference type="InterPro" id="IPR022890">
    <property type="entry name" value="Fd--NADP_Rdtase_type_2"/>
</dbReference>
<dbReference type="InterPro" id="IPR050097">
    <property type="entry name" value="Ferredoxin-NADP_redctase_2"/>
</dbReference>
<dbReference type="PANTHER" id="PTHR48105">
    <property type="entry name" value="THIOREDOXIN REDUCTASE 1-RELATED-RELATED"/>
    <property type="match status" value="1"/>
</dbReference>
<dbReference type="Pfam" id="PF07992">
    <property type="entry name" value="Pyr_redox_2"/>
    <property type="match status" value="1"/>
</dbReference>
<dbReference type="PRINTS" id="PR00368">
    <property type="entry name" value="FADPNR"/>
</dbReference>
<dbReference type="PRINTS" id="PR00469">
    <property type="entry name" value="PNDRDTASEII"/>
</dbReference>
<dbReference type="SUPFAM" id="SSF51905">
    <property type="entry name" value="FAD/NAD(P)-binding domain"/>
    <property type="match status" value="1"/>
</dbReference>
<name>FENR_RICPR</name>
<organism>
    <name type="scientific">Rickettsia prowazekii (strain Madrid E)</name>
    <dbReference type="NCBI Taxonomy" id="272947"/>
    <lineage>
        <taxon>Bacteria</taxon>
        <taxon>Pseudomonadati</taxon>
        <taxon>Pseudomonadota</taxon>
        <taxon>Alphaproteobacteria</taxon>
        <taxon>Rickettsiales</taxon>
        <taxon>Rickettsiaceae</taxon>
        <taxon>Rickettsieae</taxon>
        <taxon>Rickettsia</taxon>
        <taxon>typhus group</taxon>
    </lineage>
</organism>
<reference key="1">
    <citation type="journal article" date="1998" name="Nature">
        <title>The genome sequence of Rickettsia prowazekii and the origin of mitochondria.</title>
        <authorList>
            <person name="Andersson S.G.E."/>
            <person name="Zomorodipour A."/>
            <person name="Andersson J.O."/>
            <person name="Sicheritz-Ponten T."/>
            <person name="Alsmark U.C.M."/>
            <person name="Podowski R.M."/>
            <person name="Naeslund A.K."/>
            <person name="Eriksson A.-S."/>
            <person name="Winkler H.H."/>
            <person name="Kurland C.G."/>
        </authorList>
    </citation>
    <scope>NUCLEOTIDE SEQUENCE [LARGE SCALE GENOMIC DNA]</scope>
    <source>
        <strain>Madrid E</strain>
    </source>
</reference>
<sequence>MYNTDIVIIGSGPVGLFAVFQAGMLGMKCHVIDAQEVIGGQCITLYPEKHIYDIPAYPKIAAKELIKQLESQAAPFNPVYHLNQQATELNKHDDFFEIKTSKNTLIKSKVIIIAAGAGAFGPNKPPIANIEAFEGKSIFYFINDKSKFLGKNIVVAGGGDSAVDWAITLSEIANKIYLVHRRDKFTAATESVRQLRHIAETGKIELVTGYQLNNLDGHNSELRSVIVKDLQNNIRKLDANILLPFFGLKQDLGPLANWGFNVRLQHIEVDNYYYQTNIKGIYAIGDVAHYVGKLKLIITGFAEAACSLHHAYSRVFDGKALHFEYSTNKYEQKQ</sequence>
<feature type="chain" id="PRO_0000364927" description="Ferredoxin--NADP reductase">
    <location>
        <begin position="1"/>
        <end position="334"/>
    </location>
</feature>
<feature type="binding site" evidence="1">
    <location>
        <position position="33"/>
    </location>
    <ligand>
        <name>FAD</name>
        <dbReference type="ChEBI" id="CHEBI:57692"/>
    </ligand>
</feature>
<feature type="binding site" evidence="1">
    <location>
        <position position="41"/>
    </location>
    <ligand>
        <name>FAD</name>
        <dbReference type="ChEBI" id="CHEBI:57692"/>
    </ligand>
</feature>
<feature type="binding site" evidence="1">
    <location>
        <position position="46"/>
    </location>
    <ligand>
        <name>FAD</name>
        <dbReference type="ChEBI" id="CHEBI:57692"/>
    </ligand>
</feature>
<feature type="binding site" evidence="1">
    <location>
        <position position="86"/>
    </location>
    <ligand>
        <name>FAD</name>
        <dbReference type="ChEBI" id="CHEBI:57692"/>
    </ligand>
</feature>
<feature type="binding site" evidence="1">
    <location>
        <position position="120"/>
    </location>
    <ligand>
        <name>FAD</name>
        <dbReference type="ChEBI" id="CHEBI:57692"/>
    </ligand>
</feature>
<feature type="binding site" evidence="1">
    <location>
        <position position="286"/>
    </location>
    <ligand>
        <name>FAD</name>
        <dbReference type="ChEBI" id="CHEBI:57692"/>
    </ligand>
</feature>
<feature type="binding site" evidence="1">
    <location>
        <position position="327"/>
    </location>
    <ligand>
        <name>FAD</name>
        <dbReference type="ChEBI" id="CHEBI:57692"/>
    </ligand>
</feature>
<comment type="catalytic activity">
    <reaction evidence="1">
        <text>2 reduced [2Fe-2S]-[ferredoxin] + NADP(+) + H(+) = 2 oxidized [2Fe-2S]-[ferredoxin] + NADPH</text>
        <dbReference type="Rhea" id="RHEA:20125"/>
        <dbReference type="Rhea" id="RHEA-COMP:10000"/>
        <dbReference type="Rhea" id="RHEA-COMP:10001"/>
        <dbReference type="ChEBI" id="CHEBI:15378"/>
        <dbReference type="ChEBI" id="CHEBI:33737"/>
        <dbReference type="ChEBI" id="CHEBI:33738"/>
        <dbReference type="ChEBI" id="CHEBI:57783"/>
        <dbReference type="ChEBI" id="CHEBI:58349"/>
        <dbReference type="EC" id="1.18.1.2"/>
    </reaction>
</comment>
<comment type="cofactor">
    <cofactor evidence="1">
        <name>FAD</name>
        <dbReference type="ChEBI" id="CHEBI:57692"/>
    </cofactor>
    <text evidence="1">Binds 1 FAD per subunit.</text>
</comment>
<comment type="subunit">
    <text evidence="1">Homodimer.</text>
</comment>
<comment type="similarity">
    <text evidence="1">Belongs to the ferredoxin--NADP reductase type 2 family.</text>
</comment>